<gene>
    <name evidence="1" type="primary">atpC</name>
    <name type="ordered locus">YPN_3977</name>
    <name type="ORF">YP516_4513</name>
</gene>
<keyword id="KW-0066">ATP synthesis</keyword>
<keyword id="KW-0997">Cell inner membrane</keyword>
<keyword id="KW-1003">Cell membrane</keyword>
<keyword id="KW-0139">CF(1)</keyword>
<keyword id="KW-0375">Hydrogen ion transport</keyword>
<keyword id="KW-0406">Ion transport</keyword>
<keyword id="KW-0472">Membrane</keyword>
<keyword id="KW-0813">Transport</keyword>
<protein>
    <recommendedName>
        <fullName evidence="1">ATP synthase epsilon chain</fullName>
    </recommendedName>
    <alternativeName>
        <fullName evidence="1">ATP synthase F1 sector epsilon subunit</fullName>
    </alternativeName>
    <alternativeName>
        <fullName evidence="1">F-ATPase epsilon subunit</fullName>
    </alternativeName>
</protein>
<organism>
    <name type="scientific">Yersinia pestis bv. Antiqua (strain Nepal516)</name>
    <dbReference type="NCBI Taxonomy" id="377628"/>
    <lineage>
        <taxon>Bacteria</taxon>
        <taxon>Pseudomonadati</taxon>
        <taxon>Pseudomonadota</taxon>
        <taxon>Gammaproteobacteria</taxon>
        <taxon>Enterobacterales</taxon>
        <taxon>Yersiniaceae</taxon>
        <taxon>Yersinia</taxon>
    </lineage>
</organism>
<comment type="function">
    <text evidence="1">Produces ATP from ADP in the presence of a proton gradient across the membrane.</text>
</comment>
<comment type="subunit">
    <text>F-type ATPases have 2 components, CF(1) - the catalytic core - and CF(0) - the membrane proton channel. CF(1) has five subunits: alpha(3), beta(3), gamma(1), delta(1), epsilon(1). CF(0) has three main subunits: a, b and c.</text>
</comment>
<comment type="subcellular location">
    <subcellularLocation>
        <location evidence="1">Cell inner membrane</location>
        <topology evidence="1">Peripheral membrane protein</topology>
    </subcellularLocation>
</comment>
<comment type="similarity">
    <text evidence="1">Belongs to the ATPase epsilon chain family.</text>
</comment>
<comment type="sequence caution" evidence="2">
    <conflict type="erroneous initiation">
        <sequence resource="EMBL-CDS" id="EEO74903"/>
    </conflict>
</comment>
<reference key="1">
    <citation type="journal article" date="2006" name="J. Bacteriol.">
        <title>Complete genome sequence of Yersinia pestis strains Antiqua and Nepal516: evidence of gene reduction in an emerging pathogen.</title>
        <authorList>
            <person name="Chain P.S.G."/>
            <person name="Hu P."/>
            <person name="Malfatti S.A."/>
            <person name="Radnedge L."/>
            <person name="Larimer F."/>
            <person name="Vergez L.M."/>
            <person name="Worsham P."/>
            <person name="Chu M.C."/>
            <person name="Andersen G.L."/>
        </authorList>
    </citation>
    <scope>NUCLEOTIDE SEQUENCE [LARGE SCALE GENOMIC DNA]</scope>
    <source>
        <strain>Nepal516</strain>
    </source>
</reference>
<reference key="2">
    <citation type="submission" date="2009-04" db="EMBL/GenBank/DDBJ databases">
        <title>Yersinia pestis Nepal516A whole genome shotgun sequencing project.</title>
        <authorList>
            <person name="Plunkett G. III"/>
            <person name="Anderson B.D."/>
            <person name="Baumler D.J."/>
            <person name="Burland V."/>
            <person name="Cabot E.L."/>
            <person name="Glasner J.D."/>
            <person name="Mau B."/>
            <person name="Neeno-Eckwall E."/>
            <person name="Perna N.T."/>
            <person name="Munk A.C."/>
            <person name="Tapia R."/>
            <person name="Green L.D."/>
            <person name="Rogers Y.C."/>
            <person name="Detter J.C."/>
            <person name="Bruce D.C."/>
            <person name="Brettin T.S."/>
        </authorList>
    </citation>
    <scope>NUCLEOTIDE SEQUENCE [LARGE SCALE GENOMIC DNA]</scope>
    <source>
        <strain>Nepal516</strain>
    </source>
</reference>
<feature type="chain" id="PRO_0000265929" description="ATP synthase epsilon chain">
    <location>
        <begin position="1"/>
        <end position="137"/>
    </location>
</feature>
<evidence type="ECO:0000255" key="1">
    <source>
        <dbReference type="HAMAP-Rule" id="MF_00530"/>
    </source>
</evidence>
<evidence type="ECO:0000305" key="2"/>
<name>ATPE_YERPN</name>
<proteinExistence type="inferred from homology"/>
<accession>Q1CCH6</accession>
<accession>D1Q300</accession>
<dbReference type="EMBL" id="CP000305">
    <property type="protein sequence ID" value="ABG20304.1"/>
    <property type="molecule type" value="Genomic_DNA"/>
</dbReference>
<dbReference type="EMBL" id="ACNQ01000019">
    <property type="protein sequence ID" value="EEO74903.1"/>
    <property type="status" value="ALT_INIT"/>
    <property type="molecule type" value="Genomic_DNA"/>
</dbReference>
<dbReference type="SMR" id="Q1CCH6"/>
<dbReference type="KEGG" id="ypn:YPN_3977"/>
<dbReference type="HOGENOM" id="CLU_084338_2_0_6"/>
<dbReference type="Proteomes" id="UP000008936">
    <property type="component" value="Chromosome"/>
</dbReference>
<dbReference type="GO" id="GO:0005886">
    <property type="term" value="C:plasma membrane"/>
    <property type="evidence" value="ECO:0007669"/>
    <property type="project" value="UniProtKB-SubCell"/>
</dbReference>
<dbReference type="GO" id="GO:0045259">
    <property type="term" value="C:proton-transporting ATP synthase complex"/>
    <property type="evidence" value="ECO:0007669"/>
    <property type="project" value="UniProtKB-KW"/>
</dbReference>
<dbReference type="GO" id="GO:0005524">
    <property type="term" value="F:ATP binding"/>
    <property type="evidence" value="ECO:0007669"/>
    <property type="project" value="UniProtKB-UniRule"/>
</dbReference>
<dbReference type="GO" id="GO:0046933">
    <property type="term" value="F:proton-transporting ATP synthase activity, rotational mechanism"/>
    <property type="evidence" value="ECO:0007669"/>
    <property type="project" value="UniProtKB-UniRule"/>
</dbReference>
<dbReference type="CDD" id="cd12152">
    <property type="entry name" value="F1-ATPase_delta"/>
    <property type="match status" value="1"/>
</dbReference>
<dbReference type="FunFam" id="1.20.5.440:FF:000001">
    <property type="entry name" value="ATP synthase epsilon chain"/>
    <property type="match status" value="1"/>
</dbReference>
<dbReference type="FunFam" id="2.60.15.10:FF:000001">
    <property type="entry name" value="ATP synthase epsilon chain"/>
    <property type="match status" value="1"/>
</dbReference>
<dbReference type="Gene3D" id="1.20.5.440">
    <property type="entry name" value="ATP synthase delta/epsilon subunit, C-terminal domain"/>
    <property type="match status" value="1"/>
</dbReference>
<dbReference type="Gene3D" id="2.60.15.10">
    <property type="entry name" value="F0F1 ATP synthase delta/epsilon subunit, N-terminal"/>
    <property type="match status" value="1"/>
</dbReference>
<dbReference type="HAMAP" id="MF_00530">
    <property type="entry name" value="ATP_synth_epsil_bac"/>
    <property type="match status" value="1"/>
</dbReference>
<dbReference type="InterPro" id="IPR036794">
    <property type="entry name" value="ATP_F1_dsu/esu_C_sf"/>
</dbReference>
<dbReference type="InterPro" id="IPR001469">
    <property type="entry name" value="ATP_synth_F1_dsu/esu"/>
</dbReference>
<dbReference type="InterPro" id="IPR020546">
    <property type="entry name" value="ATP_synth_F1_dsu/esu_N"/>
</dbReference>
<dbReference type="InterPro" id="IPR020547">
    <property type="entry name" value="ATP_synth_F1_esu_C"/>
</dbReference>
<dbReference type="InterPro" id="IPR036771">
    <property type="entry name" value="ATPsynth_dsu/esu_N"/>
</dbReference>
<dbReference type="NCBIfam" id="TIGR01216">
    <property type="entry name" value="ATP_synt_epsi"/>
    <property type="match status" value="1"/>
</dbReference>
<dbReference type="NCBIfam" id="NF001847">
    <property type="entry name" value="PRK00571.1-4"/>
    <property type="match status" value="1"/>
</dbReference>
<dbReference type="PANTHER" id="PTHR13822">
    <property type="entry name" value="ATP SYNTHASE DELTA/EPSILON CHAIN"/>
    <property type="match status" value="1"/>
</dbReference>
<dbReference type="PANTHER" id="PTHR13822:SF10">
    <property type="entry name" value="ATP SYNTHASE EPSILON CHAIN, CHLOROPLASTIC"/>
    <property type="match status" value="1"/>
</dbReference>
<dbReference type="Pfam" id="PF00401">
    <property type="entry name" value="ATP-synt_DE"/>
    <property type="match status" value="1"/>
</dbReference>
<dbReference type="Pfam" id="PF02823">
    <property type="entry name" value="ATP-synt_DE_N"/>
    <property type="match status" value="1"/>
</dbReference>
<dbReference type="SUPFAM" id="SSF46604">
    <property type="entry name" value="Epsilon subunit of F1F0-ATP synthase C-terminal domain"/>
    <property type="match status" value="1"/>
</dbReference>
<dbReference type="SUPFAM" id="SSF51344">
    <property type="entry name" value="Epsilon subunit of F1F0-ATP synthase N-terminal domain"/>
    <property type="match status" value="1"/>
</dbReference>
<sequence length="137" mass="14843">MTYHLDVVSAEKKMFSGVVQKIQVTGSEGELGIFPGHAPLLTAIKPGMIRIVKQFGEEEFIYLSGGILEVQPSVVIVLADTAIRGLDLDEARALESKRKAEAHINNSHGDVDYAQASAELAKAIAKLRVIELTKKAM</sequence>